<feature type="initiator methionine" description="Removed" evidence="1">
    <location>
        <position position="1"/>
    </location>
</feature>
<feature type="chain" id="PRO_0000203713" description="Guanine nucleotide-binding protein G(o) subunit alpha">
    <location>
        <begin position="2"/>
        <end position="355"/>
    </location>
</feature>
<feature type="domain" description="G-alpha" evidence="3">
    <location>
        <begin position="32"/>
        <end position="355"/>
    </location>
</feature>
<feature type="region of interest" description="Disordered" evidence="4">
    <location>
        <begin position="1"/>
        <end position="24"/>
    </location>
</feature>
<feature type="region of interest" description="G1 motif" evidence="3">
    <location>
        <begin position="35"/>
        <end position="48"/>
    </location>
</feature>
<feature type="region of interest" description="G2 motif" evidence="3">
    <location>
        <begin position="174"/>
        <end position="182"/>
    </location>
</feature>
<feature type="region of interest" description="G3 motif" evidence="3">
    <location>
        <begin position="197"/>
        <end position="206"/>
    </location>
</feature>
<feature type="region of interest" description="G4 motif" evidence="3">
    <location>
        <begin position="267"/>
        <end position="274"/>
    </location>
</feature>
<feature type="region of interest" description="G5 motif" evidence="3">
    <location>
        <begin position="326"/>
        <end position="330"/>
    </location>
</feature>
<feature type="compositionally biased region" description="Low complexity" evidence="4">
    <location>
        <begin position="1"/>
        <end position="17"/>
    </location>
</feature>
<feature type="binding site" evidence="1">
    <location>
        <begin position="40"/>
        <end position="47"/>
    </location>
    <ligand>
        <name>GTP</name>
        <dbReference type="ChEBI" id="CHEBI:37565"/>
    </ligand>
</feature>
<feature type="binding site" evidence="1">
    <location>
        <position position="47"/>
    </location>
    <ligand>
        <name>Mg(2+)</name>
        <dbReference type="ChEBI" id="CHEBI:18420"/>
    </ligand>
</feature>
<feature type="binding site" evidence="1">
    <location>
        <begin position="176"/>
        <end position="182"/>
    </location>
    <ligand>
        <name>GTP</name>
        <dbReference type="ChEBI" id="CHEBI:37565"/>
    </ligand>
</feature>
<feature type="binding site" evidence="1">
    <location>
        <position position="182"/>
    </location>
    <ligand>
        <name>Mg(2+)</name>
        <dbReference type="ChEBI" id="CHEBI:18420"/>
    </ligand>
</feature>
<feature type="binding site" evidence="1">
    <location>
        <begin position="201"/>
        <end position="206"/>
    </location>
    <ligand>
        <name>GTP</name>
        <dbReference type="ChEBI" id="CHEBI:37565"/>
    </ligand>
</feature>
<feature type="binding site" evidence="1">
    <location>
        <begin position="201"/>
        <end position="205"/>
    </location>
    <ligand>
        <name>GTP</name>
        <dbReference type="ChEBI" id="CHEBI:37565"/>
    </ligand>
</feature>
<feature type="binding site" evidence="1">
    <location>
        <begin position="271"/>
        <end position="274"/>
    </location>
    <ligand>
        <name>GTP</name>
        <dbReference type="ChEBI" id="CHEBI:37565"/>
    </ligand>
</feature>
<feature type="binding site" evidence="1">
    <location>
        <position position="327"/>
    </location>
    <ligand>
        <name>GTP</name>
        <dbReference type="ChEBI" id="CHEBI:37565"/>
    </ligand>
</feature>
<feature type="lipid moiety-binding region" description="N-myristoyl glycine" evidence="2">
    <location>
        <position position="2"/>
    </location>
</feature>
<feature type="lipid moiety-binding region" description="S-palmitoyl cysteine" evidence="2">
    <location>
        <position position="3"/>
    </location>
</feature>
<proteinExistence type="evidence at protein level"/>
<accession>P53359</accession>
<dbReference type="EMBL" id="Z49080">
    <property type="protein sequence ID" value="CAA88905.1"/>
    <property type="molecule type" value="mRNA"/>
</dbReference>
<dbReference type="SMR" id="P53359"/>
<dbReference type="IntAct" id="P53359">
    <property type="interactions" value="1"/>
</dbReference>
<dbReference type="OrthoDB" id="5817230at2759"/>
<dbReference type="GO" id="GO:0005737">
    <property type="term" value="C:cytoplasm"/>
    <property type="evidence" value="ECO:0007669"/>
    <property type="project" value="TreeGrafter"/>
</dbReference>
<dbReference type="GO" id="GO:0005834">
    <property type="term" value="C:heterotrimeric G-protein complex"/>
    <property type="evidence" value="ECO:0007669"/>
    <property type="project" value="TreeGrafter"/>
</dbReference>
<dbReference type="GO" id="GO:0001664">
    <property type="term" value="F:G protein-coupled receptor binding"/>
    <property type="evidence" value="ECO:0007669"/>
    <property type="project" value="TreeGrafter"/>
</dbReference>
<dbReference type="GO" id="GO:0031683">
    <property type="term" value="F:G-protein beta/gamma-subunit complex binding"/>
    <property type="evidence" value="ECO:0007669"/>
    <property type="project" value="InterPro"/>
</dbReference>
<dbReference type="GO" id="GO:0005525">
    <property type="term" value="F:GTP binding"/>
    <property type="evidence" value="ECO:0007669"/>
    <property type="project" value="UniProtKB-KW"/>
</dbReference>
<dbReference type="GO" id="GO:0003924">
    <property type="term" value="F:GTPase activity"/>
    <property type="evidence" value="ECO:0007669"/>
    <property type="project" value="InterPro"/>
</dbReference>
<dbReference type="GO" id="GO:0046872">
    <property type="term" value="F:metal ion binding"/>
    <property type="evidence" value="ECO:0007669"/>
    <property type="project" value="UniProtKB-KW"/>
</dbReference>
<dbReference type="GO" id="GO:0007188">
    <property type="term" value="P:adenylate cyclase-modulating G protein-coupled receptor signaling pathway"/>
    <property type="evidence" value="ECO:0007669"/>
    <property type="project" value="InterPro"/>
</dbReference>
<dbReference type="CDD" id="cd00066">
    <property type="entry name" value="G-alpha"/>
    <property type="match status" value="1"/>
</dbReference>
<dbReference type="FunFam" id="1.10.400.10:FF:000001">
    <property type="entry name" value="Guanine nucleotide-binding protein G(I) subunit alpha"/>
    <property type="match status" value="1"/>
</dbReference>
<dbReference type="FunFam" id="3.40.50.300:FF:000720">
    <property type="entry name" value="Guanine nucleotide-binding protein G(k) subunit alpha"/>
    <property type="match status" value="1"/>
</dbReference>
<dbReference type="FunFam" id="3.40.50.300:FF:002307">
    <property type="entry name" value="Guanine nucleotide-binding protein G(k) subunit alpha"/>
    <property type="match status" value="1"/>
</dbReference>
<dbReference type="Gene3D" id="1.10.400.10">
    <property type="entry name" value="GI Alpha 1, domain 2-like"/>
    <property type="match status" value="1"/>
</dbReference>
<dbReference type="Gene3D" id="3.40.50.300">
    <property type="entry name" value="P-loop containing nucleotide triphosphate hydrolases"/>
    <property type="match status" value="1"/>
</dbReference>
<dbReference type="InterPro" id="IPR001408">
    <property type="entry name" value="Gprotein_alpha_I"/>
</dbReference>
<dbReference type="InterPro" id="IPR001019">
    <property type="entry name" value="Gprotein_alpha_su"/>
</dbReference>
<dbReference type="InterPro" id="IPR011025">
    <property type="entry name" value="GproteinA_insert"/>
</dbReference>
<dbReference type="InterPro" id="IPR027417">
    <property type="entry name" value="P-loop_NTPase"/>
</dbReference>
<dbReference type="PANTHER" id="PTHR10218:SF362">
    <property type="entry name" value="G PROTEIN ALPHA O SUBUNIT"/>
    <property type="match status" value="1"/>
</dbReference>
<dbReference type="PANTHER" id="PTHR10218">
    <property type="entry name" value="GTP-BINDING PROTEIN ALPHA SUBUNIT"/>
    <property type="match status" value="1"/>
</dbReference>
<dbReference type="Pfam" id="PF00503">
    <property type="entry name" value="G-alpha"/>
    <property type="match status" value="1"/>
</dbReference>
<dbReference type="PRINTS" id="PR00318">
    <property type="entry name" value="GPROTEINA"/>
</dbReference>
<dbReference type="PRINTS" id="PR00441">
    <property type="entry name" value="GPROTEINAI"/>
</dbReference>
<dbReference type="SMART" id="SM00275">
    <property type="entry name" value="G_alpha"/>
    <property type="match status" value="1"/>
</dbReference>
<dbReference type="SUPFAM" id="SSF52540">
    <property type="entry name" value="P-loop containing nucleoside triphosphate hydrolases"/>
    <property type="match status" value="1"/>
</dbReference>
<dbReference type="SUPFAM" id="SSF47895">
    <property type="entry name" value="Transducin (alpha subunit), insertion domain"/>
    <property type="match status" value="1"/>
</dbReference>
<dbReference type="PROSITE" id="PS51882">
    <property type="entry name" value="G_ALPHA"/>
    <property type="match status" value="1"/>
</dbReference>
<protein>
    <recommendedName>
        <fullName>Guanine nucleotide-binding protein G(o) subunit alpha</fullName>
    </recommendedName>
</protein>
<reference key="1">
    <citation type="journal article" date="1995" name="Dev. Biol.">
        <title>A developmental role for the heterotrimeric G protein Go alpha in a migratory population of embryonic neurons.</title>
        <authorList>
            <person name="Horgan A.M."/>
            <person name="Lagrange M.T."/>
            <person name="Copenhaver P.F."/>
        </authorList>
    </citation>
    <scope>NUCLEOTIDE SEQUENCE [MRNA]</scope>
    <source>
        <tissue>Brain</tissue>
    </source>
</reference>
<organism>
    <name type="scientific">Manduca sexta</name>
    <name type="common">Tobacco hawkmoth</name>
    <name type="synonym">Tobacco hornworm</name>
    <dbReference type="NCBI Taxonomy" id="7130"/>
    <lineage>
        <taxon>Eukaryota</taxon>
        <taxon>Metazoa</taxon>
        <taxon>Ecdysozoa</taxon>
        <taxon>Arthropoda</taxon>
        <taxon>Hexapoda</taxon>
        <taxon>Insecta</taxon>
        <taxon>Pterygota</taxon>
        <taxon>Neoptera</taxon>
        <taxon>Endopterygota</taxon>
        <taxon>Lepidoptera</taxon>
        <taxon>Glossata</taxon>
        <taxon>Ditrysia</taxon>
        <taxon>Bombycoidea</taxon>
        <taxon>Sphingidae</taxon>
        <taxon>Sphinginae</taxon>
        <taxon>Sphingini</taxon>
        <taxon>Manduca</taxon>
    </lineage>
</organism>
<evidence type="ECO:0000250" key="1"/>
<evidence type="ECO:0000255" key="2"/>
<evidence type="ECO:0000255" key="3">
    <source>
        <dbReference type="PROSITE-ProRule" id="PRU01230"/>
    </source>
</evidence>
<evidence type="ECO:0000256" key="4">
    <source>
        <dbReference type="SAM" id="MobiDB-lite"/>
    </source>
</evidence>
<evidence type="ECO:0000305" key="5"/>
<sequence>MGCASSAEERAAPSAQQADREKLKEDGIQAAKDIKLLLLGAGESGKSTIVKQMKIIHESGFTNEDFKQYRPVVYSNTIQSLVAILRAMPTLGITYANKDRESDGKMVFDVIQRMEDTEPFSEELLAAMKRLWADAGVQECFGRSNEYQLNDSAKYFLDDLDRLGARDYQPTEEDILRTRVKTTGIVEVHFSFKNLNFKLFDVGRGQRSERKKWIHCFEDVTAIIFCVAMSEYDQVLHEDETTNRMQESLKLFDSICNNKWFTDTSIILFLNKKDLFEEKIRKSPLTICFPEYTRAYQEYGEAAAYIRSQFEAKNNSTTKEIYCHMTATDTNNNQFVFDAVTDVIIANNLRGCGLY</sequence>
<name>GNAO_MANSE</name>
<keyword id="KW-0342">GTP-binding</keyword>
<keyword id="KW-0449">Lipoprotein</keyword>
<keyword id="KW-0460">Magnesium</keyword>
<keyword id="KW-0479">Metal-binding</keyword>
<keyword id="KW-0519">Myristate</keyword>
<keyword id="KW-0547">Nucleotide-binding</keyword>
<keyword id="KW-0564">Palmitate</keyword>
<keyword id="KW-0807">Transducer</keyword>
<comment type="function">
    <text>Guanine nucleotide-binding proteins (G proteins) are involved as modulators or transducers in various transmembrane signaling systems. The G(o) protein function is not clear.</text>
</comment>
<comment type="subunit">
    <text>G proteins are composed of 3 units; alpha, beta and gamma. The alpha chain contains the guanine nucleotide binding site.</text>
</comment>
<comment type="interaction">
    <interactant intactId="EBI-8838702">
        <id>P53359</id>
    </interactant>
    <interactant intactId="EBI-8838689">
        <id>Q4ZHV6</id>
    </interactant>
    <organismsDiffer>false</organismsDiffer>
    <experiments>5</experiments>
</comment>
<comment type="similarity">
    <text evidence="5">Belongs to the G-alpha family. G(i/o/t/z) subfamily.</text>
</comment>